<sequence length="1522" mass="171314">MKAVRNLLIYIFSTYLLVMFGFNAAQDFWCSTLVKGVIYGSYSVSEMFPKNFTNCTWTLENPDPTKYSIYLKFSKKDLSCSNFSLLAYQFDHFSHEKIKDLLRKNHSIMQLCSSKNAFVFLQYDKNFIQIRRVFPTDFPGLQKKVEEDQKSFFEFLVLNKVSPSQFGCHVLCTWLESCLKSENGRTESCGIMYTKCTCPQHLGEWGIDDQSLVLLNNVVLPLNEQTEGCLTQELQTTQVCNLTREAKRPPKEEFGMMGDHTIKSQRPRSVHEKRVPQEQADAAKFMAQTGESGVEEWSQWSACSVTCGQGSQVRTRTCVSPYGTHCSGPLRESRVCNNTALCPVHGVWEEWSPWSLCSFTCGRGQRTRTRSCTPPQYGGRPCEGPETHHKPCNIALCPVDGQWQEWSSWSHCSVTCSNGTQQRSRQCTAAAHGGSECRGPWAESRECYNPECTANGQWNQWGHWSGCSKSCDGGWERRMRTCQGAAVTGQQCEGTGEEVRRCSEQRCPAPYEICPEDYLISMVWKRTPAGDLAFNQCPLNATGTTSRRCSLSLHGVASWEQPSFARCISNEYRHLQHSIKEHLAKGQRMLAGDGMSQVTKTLLDLTQRKNFYAGDLLVSVEILRNVTDTFKRASYIPASDGVQNFFQIVSNLLDEENKEKWEDAQQIYPGSIELMQVIEDFIHIVGMGMMDFQNSYLMTGNVVASIQKLPAASVLTDINFPMKGRKGMVDWARNSEDRVVIPKSIFTPVSSKELDESSVFVLGAVLYKNLDLILPTLRNYTVVNSKVIVVTIRPEPKTTDSFLEIELAHLANGTLNPYCVLWDDSKSNESLGTWSTQGCKTVLTDASHTKCLCDRLSTFAILAQQPREIVMESSGTPSVTLIVGSGLSCLALITLAVVYAALWRYIRSERSIILINFCLSIISSNILILVGQTQTHNKSICTTTTAFLHFFFLASFCWVLTEAWQSYMAVTGKIRTRLIRKRFLCLGWGLPALVVATSVGFTRTKGYGTDHYCWLSLEGGLLYAFVGPAAAVVLVNMVIGILVFNKLVSRDGILDKKLKHRAGQMSEPHSGLTLKCAKCGVVSTTALSATTASNAMASLWSSCVVLPLLALTWMSAVLAMTDKRSILFQILFAVFDSLQGFVIVMVHCILRREVQDAFRCRLRNCQDPINADSSSSFPNGHAQIMTDFEKDVDIACRSVLHKDIGPCRAATITGTLSRISLNDDEEEKGTNPEGLSYSTLPGNVISKVIIQQPTGLHMPMSMNELSNPCLKKENTELRRTVYLCTDDNLRGADMDIVHPQERMMESDYIVMPRSSVSTQPSMKEESKMNIGMETLPHERLLHYKVNPEFNMNPPVMDQFNMNLDQHLAPQEHMQNLPFEPRTAVKNFMASELDDNVGLSRSETGSTISMSSLERRKSRYSDLDFEKVMHTRKRHMELFQELNQKFQTLDRFRDIPNTSSMENPAPNKNPWDTFKPPSEYQHYTTINVLDTEAKDTLELRPAEWEKCLNLPLDVQEGDFQTEV</sequence>
<reference key="1">
    <citation type="submission" date="2002-10" db="EMBL/GenBank/DDBJ databases">
        <title>Mouse brain-specific angiogenesis inhibitor 3.</title>
        <authorList>
            <person name="Kim K.K."/>
            <person name="Kee H.J."/>
            <person name="Koh J.T."/>
        </authorList>
    </citation>
    <scope>NUCLEOTIDE SEQUENCE [MRNA]</scope>
    <source>
        <strain>ICR</strain>
        <tissue>Brain</tissue>
    </source>
</reference>
<reference key="2">
    <citation type="journal article" date="2009" name="PLoS Biol.">
        <title>Lineage-specific biology revealed by a finished genome assembly of the mouse.</title>
        <authorList>
            <person name="Church D.M."/>
            <person name="Goodstadt L."/>
            <person name="Hillier L.W."/>
            <person name="Zody M.C."/>
            <person name="Goldstein S."/>
            <person name="She X."/>
            <person name="Bult C.J."/>
            <person name="Agarwala R."/>
            <person name="Cherry J.L."/>
            <person name="DiCuccio M."/>
            <person name="Hlavina W."/>
            <person name="Kapustin Y."/>
            <person name="Meric P."/>
            <person name="Maglott D."/>
            <person name="Birtle Z."/>
            <person name="Marques A.C."/>
            <person name="Graves T."/>
            <person name="Zhou S."/>
            <person name="Teague B."/>
            <person name="Potamousis K."/>
            <person name="Churas C."/>
            <person name="Place M."/>
            <person name="Herschleb J."/>
            <person name="Runnheim R."/>
            <person name="Forrest D."/>
            <person name="Amos-Landgraf J."/>
            <person name="Schwartz D.C."/>
            <person name="Cheng Z."/>
            <person name="Lindblad-Toh K."/>
            <person name="Eichler E.E."/>
            <person name="Ponting C.P."/>
        </authorList>
    </citation>
    <scope>NUCLEOTIDE SEQUENCE [LARGE SCALE GENOMIC DNA]</scope>
    <source>
        <strain>C57BL/6J</strain>
    </source>
</reference>
<reference key="3">
    <citation type="submission" date="2005-07" db="EMBL/GenBank/DDBJ databases">
        <authorList>
            <person name="Mural R.J."/>
            <person name="Adams M.D."/>
            <person name="Myers E.W."/>
            <person name="Smith H.O."/>
            <person name="Venter J.C."/>
        </authorList>
    </citation>
    <scope>NUCLEOTIDE SEQUENCE [LARGE SCALE GENOMIC DNA]</scope>
</reference>
<reference key="4">
    <citation type="journal article" date="2004" name="FEBS Lett.">
        <title>Expression of brain-specific angiogenesis inhibitor 3 (BAI3) in normal brain and implications for BAI3 in ischemia-induced brain angiogenesis and malignant glioma.</title>
        <authorList>
            <person name="Kee H.J."/>
            <person name="Ahn K.Y."/>
            <person name="Choi K.C."/>
            <person name="Won Song J."/>
            <person name="Heo T."/>
            <person name="Jung S."/>
            <person name="Kim J.K."/>
            <person name="Bae C.S."/>
            <person name="Kim K.K."/>
        </authorList>
    </citation>
    <scope>TISSUE SPECIFICITY</scope>
    <scope>DEVELOPMENTAL STAGE</scope>
</reference>
<reference key="5">
    <citation type="journal article" date="2006" name="Mol. Cell. Proteomics">
        <title>Comprehensive identification of phosphorylation sites in postsynaptic density preparations.</title>
        <authorList>
            <person name="Trinidad J.C."/>
            <person name="Specht C.G."/>
            <person name="Thalhammer A."/>
            <person name="Schoepfer R."/>
            <person name="Burlingame A.L."/>
        </authorList>
    </citation>
    <scope>IDENTIFICATION BY MASS SPECTROMETRY [LARGE SCALE ANALYSIS]</scope>
    <source>
        <tissue>Brain</tissue>
    </source>
</reference>
<reference key="6">
    <citation type="journal article" date="2010" name="Cell">
        <title>A tissue-specific atlas of mouse protein phosphorylation and expression.</title>
        <authorList>
            <person name="Huttlin E.L."/>
            <person name="Jedrychowski M.P."/>
            <person name="Elias J.E."/>
            <person name="Goswami T."/>
            <person name="Rad R."/>
            <person name="Beausoleil S.A."/>
            <person name="Villen J."/>
            <person name="Haas W."/>
            <person name="Sowa M.E."/>
            <person name="Gygi S.P."/>
        </authorList>
    </citation>
    <scope>PHOSPHORYLATION [LARGE SCALE ANALYSIS] AT SER-1220 AND SER-1411</scope>
    <scope>IDENTIFICATION BY MASS SPECTROMETRY [LARGE SCALE ANALYSIS]</scope>
    <source>
        <tissue>Brain</tissue>
    </source>
</reference>
<reference key="7">
    <citation type="journal article" date="2013" name="Mol. Psychiatry">
        <title>The adhesion-GPCR BAI3, a gene linked to psychiatric disorders, regulates dendrite morphogenesis in neurons.</title>
        <authorList>
            <person name="Lanoue V."/>
            <person name="Usardi A."/>
            <person name="Sigoillot S.M."/>
            <person name="Talleur M."/>
            <person name="Iyer K."/>
            <person name="Mariani J."/>
            <person name="Isope P."/>
            <person name="Vodjdani G."/>
            <person name="Heintz N."/>
            <person name="Selimi F."/>
        </authorList>
    </citation>
    <scope>INTERACTION WITH ELMO1</scope>
    <scope>FUNCTION</scope>
</reference>
<proteinExistence type="evidence at protein level"/>
<comment type="function">
    <text evidence="1 6">Receptor that plays a role in the regulation of synaptogenesis and dendritic spine formation at least partly via interaction with ELMO1 and RAC1 activity (PubMed:23628982). Promotes myoblast fusion through ELMO/DOCK1 (By similarity).</text>
</comment>
<comment type="subunit">
    <text evidence="1 6">Forms a heterodimer, consisting of a large extracellular region non-covalently linked to a seven-transmembrane moiety. Interacts (via its TSRs) with C1QL1, C1QL2, C1QL3 and C1QL4. Interacts via (C-terminus) with ELMO1 (PubMed:23628982), ELMO2 and ELMO3.</text>
</comment>
<comment type="subcellular location">
    <subcellularLocation>
        <location evidence="1">Cell membrane</location>
        <topology evidence="2">Multi-pass membrane protein</topology>
    </subcellularLocation>
</comment>
<comment type="tissue specificity">
    <text evidence="5">Brain-specific expression.</text>
</comment>
<comment type="developmental stage">
    <text evidence="5">Limited to the central nervous system (CNS) at all developmental stages. Peaks 1 day after birth.</text>
</comment>
<comment type="PTM">
    <text evidence="1">The endogenous protein is proteolytically cleaved into 2 subunits, an extracellular subunit and a seven-transmembrane subunit.</text>
</comment>
<comment type="similarity">
    <text evidence="7">Belongs to the G-protein coupled receptor 2 family. Adhesion G-protein coupled receptor (ADGR) subfamily.</text>
</comment>
<feature type="signal peptide" evidence="2">
    <location>
        <begin position="1"/>
        <end position="25"/>
    </location>
</feature>
<feature type="chain" id="PRO_0000012866" description="Adhesion G protein-coupled receptor B3">
    <location>
        <begin position="26"/>
        <end position="1522"/>
    </location>
</feature>
<feature type="topological domain" description="Extracellular" evidence="7">
    <location>
        <begin position="26"/>
        <end position="880"/>
    </location>
</feature>
<feature type="transmembrane region" description="Helical; Name=1" evidence="2">
    <location>
        <begin position="881"/>
        <end position="901"/>
    </location>
</feature>
<feature type="topological domain" description="Cytoplasmic" evidence="7">
    <location>
        <begin position="902"/>
        <end position="910"/>
    </location>
</feature>
<feature type="transmembrane region" description="Helical; Name=2" evidence="2">
    <location>
        <begin position="911"/>
        <end position="931"/>
    </location>
</feature>
<feature type="topological domain" description="Extracellular" evidence="7">
    <location>
        <begin position="932"/>
        <end position="939"/>
    </location>
</feature>
<feature type="transmembrane region" description="Helical; Name=3" evidence="2">
    <location>
        <begin position="940"/>
        <end position="960"/>
    </location>
</feature>
<feature type="topological domain" description="Cytoplasmic" evidence="7">
    <location>
        <begin position="961"/>
        <end position="981"/>
    </location>
</feature>
<feature type="transmembrane region" description="Helical; Name=4" evidence="2">
    <location>
        <begin position="982"/>
        <end position="1002"/>
    </location>
</feature>
<feature type="topological domain" description="Extracellular" evidence="7">
    <location>
        <begin position="1003"/>
        <end position="1023"/>
    </location>
</feature>
<feature type="transmembrane region" description="Helical; Name=5" evidence="2">
    <location>
        <begin position="1024"/>
        <end position="1044"/>
    </location>
</feature>
<feature type="topological domain" description="Cytoplasmic" evidence="7">
    <location>
        <begin position="1045"/>
        <end position="1098"/>
    </location>
</feature>
<feature type="transmembrane region" description="Helical; Name=6" evidence="2">
    <location>
        <begin position="1099"/>
        <end position="1119"/>
    </location>
</feature>
<feature type="topological domain" description="Extracellular" evidence="7">
    <location>
        <begin position="1120"/>
        <end position="1125"/>
    </location>
</feature>
<feature type="transmembrane region" description="Helical; Name=7" evidence="2">
    <location>
        <begin position="1126"/>
        <end position="1146"/>
    </location>
</feature>
<feature type="topological domain" description="Cytoplasmic" evidence="7">
    <location>
        <begin position="1147"/>
        <end position="1522"/>
    </location>
</feature>
<feature type="domain" description="CUB">
    <location>
        <begin position="30"/>
        <end position="159"/>
    </location>
</feature>
<feature type="domain" description="TSP type-1 1" evidence="4">
    <location>
        <begin position="291"/>
        <end position="343"/>
    </location>
</feature>
<feature type="domain" description="TSP type-1 2" evidence="4">
    <location>
        <begin position="345"/>
        <end position="398"/>
    </location>
</feature>
<feature type="domain" description="TSP type-1 3" evidence="4">
    <location>
        <begin position="400"/>
        <end position="453"/>
    </location>
</feature>
<feature type="domain" description="TSP type-1 4" evidence="4">
    <location>
        <begin position="455"/>
        <end position="508"/>
    </location>
</feature>
<feature type="domain" description="GAIN-B" evidence="3">
    <location>
        <begin position="693"/>
        <end position="869"/>
    </location>
</feature>
<feature type="region of interest" description="GPS" evidence="3">
    <location>
        <begin position="819"/>
        <end position="869"/>
    </location>
</feature>
<feature type="modified residue" description="Phosphoserine" evidence="1">
    <location>
        <position position="619"/>
    </location>
</feature>
<feature type="modified residue" description="Phosphoserine" evidence="8">
    <location>
        <position position="1220"/>
    </location>
</feature>
<feature type="modified residue" description="Phosphoserine" evidence="8">
    <location>
        <position position="1411"/>
    </location>
</feature>
<feature type="glycosylation site" description="N-linked (GlcNAc...) asparagine" evidence="2">
    <location>
        <position position="51"/>
    </location>
</feature>
<feature type="glycosylation site" description="N-linked (GlcNAc...) asparagine" evidence="2">
    <location>
        <position position="54"/>
    </location>
</feature>
<feature type="glycosylation site" description="N-linked (GlcNAc...) asparagine" evidence="2">
    <location>
        <position position="82"/>
    </location>
</feature>
<feature type="glycosylation site" description="N-linked (GlcNAc...) asparagine" evidence="2">
    <location>
        <position position="105"/>
    </location>
</feature>
<feature type="glycosylation site" description="N-linked (GlcNAc...) asparagine" evidence="2">
    <location>
        <position position="241"/>
    </location>
</feature>
<feature type="glycosylation site" description="N-linked (GlcNAc...) asparagine" evidence="2">
    <location>
        <position position="337"/>
    </location>
</feature>
<feature type="glycosylation site" description="N-linked (GlcNAc...) asparagine" evidence="2">
    <location>
        <position position="418"/>
    </location>
</feature>
<feature type="glycosylation site" description="N-linked (GlcNAc...) asparagine" evidence="2">
    <location>
        <position position="540"/>
    </location>
</feature>
<feature type="glycosylation site" description="N-linked (GlcNAc...) asparagine" evidence="2">
    <location>
        <position position="625"/>
    </location>
</feature>
<feature type="glycosylation site" description="N-linked (GlcNAc...) asparagine" evidence="2">
    <location>
        <position position="779"/>
    </location>
</feature>
<feature type="glycosylation site" description="N-linked (GlcNAc...) asparagine" evidence="2">
    <location>
        <position position="812"/>
    </location>
</feature>
<feature type="glycosylation site" description="N-linked (GlcNAc...) asparagine" evidence="2">
    <location>
        <position position="828"/>
    </location>
</feature>
<feature type="glycosylation site" description="N-linked (GlcNAc...) asparagine" evidence="2">
    <location>
        <position position="937"/>
    </location>
</feature>
<feature type="disulfide bond" evidence="4">
    <location>
        <begin position="303"/>
        <end position="336"/>
    </location>
</feature>
<feature type="disulfide bond" evidence="4">
    <location>
        <begin position="307"/>
        <end position="342"/>
    </location>
</feature>
<feature type="disulfide bond" evidence="4">
    <location>
        <begin position="318"/>
        <end position="326"/>
    </location>
</feature>
<feature type="disulfide bond" evidence="4">
    <location>
        <begin position="357"/>
        <end position="392"/>
    </location>
</feature>
<feature type="disulfide bond" evidence="4">
    <location>
        <begin position="361"/>
        <end position="397"/>
    </location>
</feature>
<feature type="disulfide bond" evidence="4">
    <location>
        <begin position="372"/>
        <end position="382"/>
    </location>
</feature>
<feature type="disulfide bond" evidence="4">
    <location>
        <begin position="412"/>
        <end position="447"/>
    </location>
</feature>
<feature type="disulfide bond" evidence="4">
    <location>
        <begin position="416"/>
        <end position="452"/>
    </location>
</feature>
<feature type="disulfide bond" evidence="4">
    <location>
        <begin position="427"/>
        <end position="437"/>
    </location>
</feature>
<feature type="disulfide bond" evidence="4">
    <location>
        <begin position="467"/>
        <end position="502"/>
    </location>
</feature>
<feature type="disulfide bond" evidence="4">
    <location>
        <begin position="471"/>
        <end position="507"/>
    </location>
</feature>
<feature type="disulfide bond" evidence="4">
    <location>
        <begin position="482"/>
        <end position="492"/>
    </location>
</feature>
<feature type="disulfide bond" evidence="4">
    <location>
        <begin position="514"/>
        <end position="549"/>
    </location>
</feature>
<feature type="disulfide bond" evidence="4">
    <location>
        <begin position="537"/>
        <end position="567"/>
    </location>
</feature>
<feature type="disulfide bond" evidence="3">
    <location>
        <begin position="819"/>
        <end position="851"/>
    </location>
</feature>
<feature type="disulfide bond" evidence="3">
    <location>
        <begin position="839"/>
        <end position="853"/>
    </location>
</feature>
<feature type="sequence conflict" description="In Ref. 1; AAO27431." evidence="7" ref="1">
    <original>L</original>
    <variation>V</variation>
    <location>
        <position position="215"/>
    </location>
</feature>
<feature type="sequence conflict" description="In Ref. 1; AAO27431." evidence="7" ref="1">
    <original>H</original>
    <variation>Y</variation>
    <location>
        <position position="683"/>
    </location>
</feature>
<feature type="sequence conflict" description="In Ref. 1; AAO27431." evidence="7" ref="1">
    <original>V</original>
    <variation>I</variation>
    <location>
        <position position="783"/>
    </location>
</feature>
<accession>Q80ZF8</accession>
<accession>G3XA05</accession>
<keyword id="KW-0002">3D-structure</keyword>
<keyword id="KW-1003">Cell membrane</keyword>
<keyword id="KW-1015">Disulfide bond</keyword>
<keyword id="KW-0297">G-protein coupled receptor</keyword>
<keyword id="KW-0325">Glycoprotein</keyword>
<keyword id="KW-0472">Membrane</keyword>
<keyword id="KW-0597">Phosphoprotein</keyword>
<keyword id="KW-0675">Receptor</keyword>
<keyword id="KW-1185">Reference proteome</keyword>
<keyword id="KW-0677">Repeat</keyword>
<keyword id="KW-0732">Signal</keyword>
<keyword id="KW-0807">Transducer</keyword>
<keyword id="KW-0812">Transmembrane</keyword>
<keyword id="KW-1133">Transmembrane helix</keyword>
<organism>
    <name type="scientific">Mus musculus</name>
    <name type="common">Mouse</name>
    <dbReference type="NCBI Taxonomy" id="10090"/>
    <lineage>
        <taxon>Eukaryota</taxon>
        <taxon>Metazoa</taxon>
        <taxon>Chordata</taxon>
        <taxon>Craniata</taxon>
        <taxon>Vertebrata</taxon>
        <taxon>Euteleostomi</taxon>
        <taxon>Mammalia</taxon>
        <taxon>Eutheria</taxon>
        <taxon>Euarchontoglires</taxon>
        <taxon>Glires</taxon>
        <taxon>Rodentia</taxon>
        <taxon>Myomorpha</taxon>
        <taxon>Muroidea</taxon>
        <taxon>Muridae</taxon>
        <taxon>Murinae</taxon>
        <taxon>Mus</taxon>
        <taxon>Mus</taxon>
    </lineage>
</organism>
<evidence type="ECO:0000250" key="1">
    <source>
        <dbReference type="UniProtKB" id="O60242"/>
    </source>
</evidence>
<evidence type="ECO:0000255" key="2"/>
<evidence type="ECO:0000255" key="3">
    <source>
        <dbReference type="PROSITE-ProRule" id="PRU00098"/>
    </source>
</evidence>
<evidence type="ECO:0000255" key="4">
    <source>
        <dbReference type="PROSITE-ProRule" id="PRU00210"/>
    </source>
</evidence>
<evidence type="ECO:0000269" key="5">
    <source>
    </source>
</evidence>
<evidence type="ECO:0000269" key="6">
    <source>
    </source>
</evidence>
<evidence type="ECO:0000305" key="7"/>
<evidence type="ECO:0007744" key="8">
    <source>
    </source>
</evidence>
<gene>
    <name type="primary">Adgrb3</name>
    <name type="synonym">Bai3</name>
</gene>
<dbReference type="EMBL" id="AY168406">
    <property type="protein sequence ID" value="AAO27431.1"/>
    <property type="molecule type" value="mRNA"/>
</dbReference>
<dbReference type="EMBL" id="AC116556">
    <property type="status" value="NOT_ANNOTATED_CDS"/>
    <property type="molecule type" value="Genomic_DNA"/>
</dbReference>
<dbReference type="EMBL" id="AC117221">
    <property type="status" value="NOT_ANNOTATED_CDS"/>
    <property type="molecule type" value="Genomic_DNA"/>
</dbReference>
<dbReference type="EMBL" id="AC121828">
    <property type="status" value="NOT_ANNOTATED_CDS"/>
    <property type="molecule type" value="Genomic_DNA"/>
</dbReference>
<dbReference type="EMBL" id="AC122187">
    <property type="status" value="NOT_ANNOTATED_CDS"/>
    <property type="molecule type" value="Genomic_DNA"/>
</dbReference>
<dbReference type="EMBL" id="AC129314">
    <property type="status" value="NOT_ANNOTATED_CDS"/>
    <property type="molecule type" value="Genomic_DNA"/>
</dbReference>
<dbReference type="EMBL" id="AC140308">
    <property type="status" value="NOT_ANNOTATED_CDS"/>
    <property type="molecule type" value="Genomic_DNA"/>
</dbReference>
<dbReference type="EMBL" id="CH466536">
    <property type="protein sequence ID" value="EDL14414.1"/>
    <property type="molecule type" value="Genomic_DNA"/>
</dbReference>
<dbReference type="CCDS" id="CCDS14855.1"/>
<dbReference type="RefSeq" id="NP_783573.4">
    <property type="nucleotide sequence ID" value="NM_175642.4"/>
</dbReference>
<dbReference type="PDB" id="8VWY">
    <property type="method" value="EM"/>
    <property type="resolution" value="2.78 A"/>
    <property type="chains" value="A/B/C=27-290"/>
</dbReference>
<dbReference type="PDBsum" id="8VWY"/>
<dbReference type="EMDB" id="EMD-43605"/>
<dbReference type="SMR" id="Q80ZF8"/>
<dbReference type="BioGRID" id="229189">
    <property type="interactions" value="9"/>
</dbReference>
<dbReference type="FunCoup" id="Q80ZF8">
    <property type="interactions" value="443"/>
</dbReference>
<dbReference type="IntAct" id="Q80ZF8">
    <property type="interactions" value="4"/>
</dbReference>
<dbReference type="MINT" id="Q80ZF8"/>
<dbReference type="STRING" id="10090.ENSMUSP00000116231"/>
<dbReference type="GlyConnect" id="2109">
    <property type="glycosylation" value="1 N-Linked glycan (1 site)"/>
</dbReference>
<dbReference type="GlyCosmos" id="Q80ZF8">
    <property type="glycosylation" value="13 sites, 1 glycan"/>
</dbReference>
<dbReference type="GlyGen" id="Q80ZF8">
    <property type="glycosylation" value="15 sites, 6 N-linked glycans (5 sites), 1 O-linked glycan (2 sites)"/>
</dbReference>
<dbReference type="iPTMnet" id="Q80ZF8"/>
<dbReference type="PhosphoSitePlus" id="Q80ZF8"/>
<dbReference type="SwissPalm" id="Q80ZF8"/>
<dbReference type="PaxDb" id="10090-ENSMUSP00000116231"/>
<dbReference type="ProteomicsDB" id="281957"/>
<dbReference type="Antibodypedia" id="2938">
    <property type="antibodies" value="237 antibodies from 33 providers"/>
</dbReference>
<dbReference type="DNASU" id="210933"/>
<dbReference type="Ensembl" id="ENSMUST00000041838.7">
    <property type="protein sequence ID" value="ENSMUSP00000035612.7"/>
    <property type="gene ID" value="ENSMUSG00000033569.18"/>
</dbReference>
<dbReference type="Ensembl" id="ENSMUST00000135518.8">
    <property type="protein sequence ID" value="ENSMUSP00000119804.2"/>
    <property type="gene ID" value="ENSMUSG00000033569.18"/>
</dbReference>
<dbReference type="Ensembl" id="ENSMUST00000151309.8">
    <property type="protein sequence ID" value="ENSMUSP00000116231.2"/>
    <property type="gene ID" value="ENSMUSG00000033569.18"/>
</dbReference>
<dbReference type="GeneID" id="210933"/>
<dbReference type="KEGG" id="mmu:210933"/>
<dbReference type="UCSC" id="uc007amw.2">
    <property type="organism name" value="mouse"/>
</dbReference>
<dbReference type="AGR" id="MGI:2441837"/>
<dbReference type="CTD" id="577"/>
<dbReference type="MGI" id="MGI:2441837">
    <property type="gene designation" value="Adgrb3"/>
</dbReference>
<dbReference type="VEuPathDB" id="HostDB:ENSMUSG00000033569"/>
<dbReference type="eggNOG" id="ENOG502QRKJ">
    <property type="taxonomic scope" value="Eukaryota"/>
</dbReference>
<dbReference type="GeneTree" id="ENSGT00940000155081"/>
<dbReference type="InParanoid" id="Q80ZF8"/>
<dbReference type="OMA" id="CESKNAF"/>
<dbReference type="OrthoDB" id="5989160at2759"/>
<dbReference type="PhylomeDB" id="Q80ZF8"/>
<dbReference type="TreeFam" id="TF331634"/>
<dbReference type="BioGRID-ORCS" id="210933">
    <property type="hits" value="1 hit in 76 CRISPR screens"/>
</dbReference>
<dbReference type="CD-CODE" id="CE726F99">
    <property type="entry name" value="Postsynaptic density"/>
</dbReference>
<dbReference type="ChiTaRS" id="Adgrb3">
    <property type="organism name" value="mouse"/>
</dbReference>
<dbReference type="PRO" id="PR:Q80ZF8"/>
<dbReference type="Proteomes" id="UP000000589">
    <property type="component" value="Chromosome 1"/>
</dbReference>
<dbReference type="RNAct" id="Q80ZF8">
    <property type="molecule type" value="protein"/>
</dbReference>
<dbReference type="Bgee" id="ENSMUSG00000033569">
    <property type="expression patterns" value="Expressed in lateral septal nucleus and 117 other cell types or tissues"/>
</dbReference>
<dbReference type="ExpressionAtlas" id="Q80ZF8">
    <property type="expression patterns" value="baseline and differential"/>
</dbReference>
<dbReference type="GO" id="GO:0150053">
    <property type="term" value="C:cerebellar climbing fiber to Purkinje cell synapse"/>
    <property type="evidence" value="ECO:0000314"/>
    <property type="project" value="SynGO"/>
</dbReference>
<dbReference type="GO" id="GO:0005886">
    <property type="term" value="C:plasma membrane"/>
    <property type="evidence" value="ECO:0000250"/>
    <property type="project" value="UniProtKB"/>
</dbReference>
<dbReference type="GO" id="GO:0098794">
    <property type="term" value="C:postsynapse"/>
    <property type="evidence" value="ECO:0000314"/>
    <property type="project" value="MGI"/>
</dbReference>
<dbReference type="GO" id="GO:0098839">
    <property type="term" value="C:postsynaptic density membrane"/>
    <property type="evidence" value="ECO:0000314"/>
    <property type="project" value="SynGO"/>
</dbReference>
<dbReference type="GO" id="GO:0043083">
    <property type="term" value="C:synaptic cleft"/>
    <property type="evidence" value="ECO:0000314"/>
    <property type="project" value="MGI"/>
</dbReference>
<dbReference type="GO" id="GO:0004930">
    <property type="term" value="F:G protein-coupled receptor activity"/>
    <property type="evidence" value="ECO:0007669"/>
    <property type="project" value="UniProtKB-KW"/>
</dbReference>
<dbReference type="GO" id="GO:0005096">
    <property type="term" value="F:GTPase activator activity"/>
    <property type="evidence" value="ECO:0000314"/>
    <property type="project" value="UniProtKB"/>
</dbReference>
<dbReference type="GO" id="GO:0007166">
    <property type="term" value="P:cell surface receptor signaling pathway"/>
    <property type="evidence" value="ECO:0007669"/>
    <property type="project" value="InterPro"/>
</dbReference>
<dbReference type="GO" id="GO:0099558">
    <property type="term" value="P:maintenance of synapse structure"/>
    <property type="evidence" value="ECO:0000315"/>
    <property type="project" value="MGI"/>
</dbReference>
<dbReference type="GO" id="GO:0061743">
    <property type="term" value="P:motor learning"/>
    <property type="evidence" value="ECO:0000316"/>
    <property type="project" value="MGI"/>
</dbReference>
<dbReference type="GO" id="GO:0007520">
    <property type="term" value="P:myoblast fusion"/>
    <property type="evidence" value="ECO:0000250"/>
    <property type="project" value="UniProtKB"/>
</dbReference>
<dbReference type="GO" id="GO:0016525">
    <property type="term" value="P:negative regulation of angiogenesis"/>
    <property type="evidence" value="ECO:0007669"/>
    <property type="project" value="InterPro"/>
</dbReference>
<dbReference type="GO" id="GO:0016322">
    <property type="term" value="P:neuron remodeling"/>
    <property type="evidence" value="ECO:0000316"/>
    <property type="project" value="MGI"/>
</dbReference>
<dbReference type="GO" id="GO:0051965">
    <property type="term" value="P:positive regulation of synapse assembly"/>
    <property type="evidence" value="ECO:0000314"/>
    <property type="project" value="MGI"/>
</dbReference>
<dbReference type="GO" id="GO:0048814">
    <property type="term" value="P:regulation of dendrite morphogenesis"/>
    <property type="evidence" value="ECO:0000315"/>
    <property type="project" value="UniProtKB"/>
</dbReference>
<dbReference type="GO" id="GO:0090128">
    <property type="term" value="P:regulation of synapse maturation"/>
    <property type="evidence" value="ECO:0000314"/>
    <property type="project" value="SynGO"/>
</dbReference>
<dbReference type="GO" id="GO:1905806">
    <property type="term" value="P:regulation of synapse pruning"/>
    <property type="evidence" value="ECO:0000314"/>
    <property type="project" value="SynGO"/>
</dbReference>
<dbReference type="CDD" id="cd15989">
    <property type="entry name" value="7tmB2_BAI3"/>
    <property type="match status" value="1"/>
</dbReference>
<dbReference type="FunFam" id="1.25.40.610:FF:000002">
    <property type="entry name" value="Adhesion G protein-coupled receptor B2"/>
    <property type="match status" value="1"/>
</dbReference>
<dbReference type="FunFam" id="2.20.100.10:FF:000003">
    <property type="entry name" value="Adhesion G protein-coupled receptor B2"/>
    <property type="match status" value="2"/>
</dbReference>
<dbReference type="FunFam" id="2.20.100.10:FF:000004">
    <property type="entry name" value="Adhesion G protein-coupled receptor B2"/>
    <property type="match status" value="1"/>
</dbReference>
<dbReference type="FunFam" id="2.20.100.10:FF:000012">
    <property type="entry name" value="Adhesion G protein-coupled receptor B2"/>
    <property type="match status" value="1"/>
</dbReference>
<dbReference type="FunFam" id="4.10.1240.10:FF:000002">
    <property type="entry name" value="Adhesion G protein-coupled receptor B2"/>
    <property type="match status" value="1"/>
</dbReference>
<dbReference type="FunFam" id="2.60.220.50:FF:000004">
    <property type="entry name" value="Adhesion G protein-coupled receptor B3"/>
    <property type="match status" value="1"/>
</dbReference>
<dbReference type="Gene3D" id="1.25.40.610">
    <property type="match status" value="1"/>
</dbReference>
<dbReference type="Gene3D" id="2.60.220.50">
    <property type="match status" value="1"/>
</dbReference>
<dbReference type="Gene3D" id="4.10.1240.10">
    <property type="entry name" value="GPCR, family 2, extracellular hormone receptor domain"/>
    <property type="match status" value="1"/>
</dbReference>
<dbReference type="Gene3D" id="1.20.1070.10">
    <property type="entry name" value="Rhodopsin 7-helix transmembrane proteins"/>
    <property type="match status" value="1"/>
</dbReference>
<dbReference type="Gene3D" id="2.20.100.10">
    <property type="entry name" value="Thrombospondin type-1 (TSP1) repeat"/>
    <property type="match status" value="4"/>
</dbReference>
<dbReference type="InterPro" id="IPR043838">
    <property type="entry name" value="AGRB_N"/>
</dbReference>
<dbReference type="InterPro" id="IPR057244">
    <property type="entry name" value="GAIN_B"/>
</dbReference>
<dbReference type="InterPro" id="IPR032471">
    <property type="entry name" value="GAIN_dom_N"/>
</dbReference>
<dbReference type="InterPro" id="IPR046338">
    <property type="entry name" value="GAIN_dom_sf"/>
</dbReference>
<dbReference type="InterPro" id="IPR017981">
    <property type="entry name" value="GPCR_2-like_7TM"/>
</dbReference>
<dbReference type="InterPro" id="IPR008077">
    <property type="entry name" value="GPCR_2_brain_angio_inhib"/>
</dbReference>
<dbReference type="InterPro" id="IPR036445">
    <property type="entry name" value="GPCR_2_extracell_dom_sf"/>
</dbReference>
<dbReference type="InterPro" id="IPR001879">
    <property type="entry name" value="GPCR_2_extracellular_dom"/>
</dbReference>
<dbReference type="InterPro" id="IPR000832">
    <property type="entry name" value="GPCR_2_secretin-like"/>
</dbReference>
<dbReference type="InterPro" id="IPR017983">
    <property type="entry name" value="GPCR_2_secretin-like_CS"/>
</dbReference>
<dbReference type="InterPro" id="IPR000203">
    <property type="entry name" value="GPS"/>
</dbReference>
<dbReference type="InterPro" id="IPR000884">
    <property type="entry name" value="TSP1_rpt"/>
</dbReference>
<dbReference type="InterPro" id="IPR036383">
    <property type="entry name" value="TSP1_rpt_sf"/>
</dbReference>
<dbReference type="PANTHER" id="PTHR12011:SF40">
    <property type="entry name" value="ADHESION G PROTEIN-COUPLED RECEPTOR B3"/>
    <property type="match status" value="1"/>
</dbReference>
<dbReference type="PANTHER" id="PTHR12011">
    <property type="entry name" value="ADHESION G-PROTEIN COUPLED RECEPTOR"/>
    <property type="match status" value="1"/>
</dbReference>
<dbReference type="Pfam" id="PF00002">
    <property type="entry name" value="7tm_2"/>
    <property type="match status" value="1"/>
</dbReference>
<dbReference type="Pfam" id="PF19188">
    <property type="entry name" value="AGRB_N"/>
    <property type="match status" value="1"/>
</dbReference>
<dbReference type="Pfam" id="PF16489">
    <property type="entry name" value="GAIN"/>
    <property type="match status" value="1"/>
</dbReference>
<dbReference type="Pfam" id="PF01825">
    <property type="entry name" value="GPS"/>
    <property type="match status" value="1"/>
</dbReference>
<dbReference type="Pfam" id="PF02793">
    <property type="entry name" value="HRM"/>
    <property type="match status" value="1"/>
</dbReference>
<dbReference type="Pfam" id="PF00090">
    <property type="entry name" value="TSP_1"/>
    <property type="match status" value="4"/>
</dbReference>
<dbReference type="PRINTS" id="PR01694">
    <property type="entry name" value="BAIPRECURSOR"/>
</dbReference>
<dbReference type="PRINTS" id="PR00249">
    <property type="entry name" value="GPCRSECRETIN"/>
</dbReference>
<dbReference type="SMART" id="SM00303">
    <property type="entry name" value="GPS"/>
    <property type="match status" value="1"/>
</dbReference>
<dbReference type="SMART" id="SM00008">
    <property type="entry name" value="HormR"/>
    <property type="match status" value="1"/>
</dbReference>
<dbReference type="SMART" id="SM00209">
    <property type="entry name" value="TSP1"/>
    <property type="match status" value="4"/>
</dbReference>
<dbReference type="SUPFAM" id="SSF82895">
    <property type="entry name" value="TSP-1 type 1 repeat"/>
    <property type="match status" value="4"/>
</dbReference>
<dbReference type="PROSITE" id="PS00650">
    <property type="entry name" value="G_PROTEIN_RECEP_F2_2"/>
    <property type="match status" value="1"/>
</dbReference>
<dbReference type="PROSITE" id="PS50227">
    <property type="entry name" value="G_PROTEIN_RECEP_F2_3"/>
    <property type="match status" value="1"/>
</dbReference>
<dbReference type="PROSITE" id="PS50261">
    <property type="entry name" value="G_PROTEIN_RECEP_F2_4"/>
    <property type="match status" value="1"/>
</dbReference>
<dbReference type="PROSITE" id="PS50221">
    <property type="entry name" value="GAIN_B"/>
    <property type="match status" value="1"/>
</dbReference>
<dbReference type="PROSITE" id="PS50092">
    <property type="entry name" value="TSP1"/>
    <property type="match status" value="4"/>
</dbReference>
<protein>
    <recommendedName>
        <fullName>Adhesion G protein-coupled receptor B3</fullName>
    </recommendedName>
    <alternativeName>
        <fullName>Brain-specific angiogenesis inhibitor 3</fullName>
    </alternativeName>
</protein>
<name>AGRB3_MOUSE</name>